<feature type="chain" id="PRO_0000440358" description="Homoserine O-succinyltransferase">
    <location>
        <begin position="1"/>
        <end position="333"/>
    </location>
</feature>
<feature type="active site" description="Acyl-thioester intermediate" evidence="1">
    <location>
        <position position="147"/>
    </location>
</feature>
<feature type="active site" description="Proton acceptor" evidence="1">
    <location>
        <position position="239"/>
    </location>
</feature>
<feature type="active site" evidence="1">
    <location>
        <position position="241"/>
    </location>
</feature>
<feature type="binding site" evidence="1">
    <location>
        <position position="168"/>
    </location>
    <ligand>
        <name>substrate</name>
    </ligand>
</feature>
<feature type="binding site" evidence="1">
    <location>
        <position position="196"/>
    </location>
    <ligand>
        <name>substrate</name>
    </ligand>
</feature>
<feature type="binding site" evidence="1">
    <location>
        <position position="253"/>
    </location>
    <ligand>
        <name>substrate</name>
    </ligand>
</feature>
<feature type="site" description="Important for acyl-CoA specificity" evidence="1">
    <location>
        <position position="114"/>
    </location>
</feature>
<feature type="site" description="Important for acyl-CoA specificity" evidence="1">
    <location>
        <position position="148"/>
    </location>
</feature>
<feature type="site" description="Important for substrate specificity" evidence="1">
    <location>
        <position position="196"/>
    </location>
</feature>
<comment type="function">
    <text evidence="1 2">Transfers a succinyl group from succinyl-CoA to L-homoserine, forming succinyl-L-homoserine.</text>
</comment>
<comment type="catalytic activity">
    <reaction evidence="1 2">
        <text>L-homoserine + succinyl-CoA = O-succinyl-L-homoserine + CoA</text>
        <dbReference type="Rhea" id="RHEA:22008"/>
        <dbReference type="ChEBI" id="CHEBI:57287"/>
        <dbReference type="ChEBI" id="CHEBI:57292"/>
        <dbReference type="ChEBI" id="CHEBI:57476"/>
        <dbReference type="ChEBI" id="CHEBI:57661"/>
        <dbReference type="EC" id="2.3.1.46"/>
    </reaction>
</comment>
<comment type="pathway">
    <text evidence="1">Amino-acid biosynthesis; L-methionine biosynthesis via de novo pathway; O-succinyl-L-homoserine from L-homoserine: step 1/1.</text>
</comment>
<comment type="subcellular location">
    <subcellularLocation>
        <location evidence="1">Cytoplasm</location>
    </subcellularLocation>
</comment>
<comment type="similarity">
    <text evidence="1">Belongs to the MetA family.</text>
</comment>
<organism>
    <name type="scientific">Rhodopseudomonas palustris</name>
    <dbReference type="NCBI Taxonomy" id="1076"/>
    <lineage>
        <taxon>Bacteria</taxon>
        <taxon>Pseudomonadati</taxon>
        <taxon>Pseudomonadota</taxon>
        <taxon>Alphaproteobacteria</taxon>
        <taxon>Hyphomicrobiales</taxon>
        <taxon>Nitrobacteraceae</taxon>
        <taxon>Rhodopseudomonas</taxon>
    </lineage>
</organism>
<accession>A0A1D3PCI9</accession>
<gene>
    <name evidence="1 3" type="primary">metAS</name>
    <name evidence="4" type="synonym">metA</name>
</gene>
<sequence length="333" mass="36944">MTLLFDKTGPIDSPTLAPASVDNHCRSPDRSAAARVIEIGLVNNMSDAALRATERQFMRLLRAGSGEHLVRLHCFALPSVQRSPATRQRIDSLYADIADLRHTRLDALIVTGAEPRAATLQSEPYWDEMRALVDWAEANTRSTIWSCLAAHAAVLHLDGIERERLPQKCSGVFAGEQVNDDALLSDLPSPLKVPHSRLNDLAADRLAARGYEVLTHAPNAGVDIFARQGRSRFVFFQGHPEYDATSLQREYLRDIGRFLTGERHDYPEFPVDYFDADIEDALDAFRAEAEAARDPAIIARLPHLALRQGTAEGIETTANALFRNWLISLASEP</sequence>
<keyword id="KW-0012">Acyltransferase</keyword>
<keyword id="KW-0028">Amino-acid biosynthesis</keyword>
<keyword id="KW-0963">Cytoplasm</keyword>
<keyword id="KW-0486">Methionine biosynthesis</keyword>
<keyword id="KW-0808">Transferase</keyword>
<evidence type="ECO:0000255" key="1">
    <source>
        <dbReference type="HAMAP-Rule" id="MF_00295"/>
    </source>
</evidence>
<evidence type="ECO:0000269" key="2">
    <source>
    </source>
</evidence>
<evidence type="ECO:0000303" key="3">
    <source>
    </source>
</evidence>
<evidence type="ECO:0000312" key="4">
    <source>
        <dbReference type="EMBL" id="SCN13860.1"/>
    </source>
</evidence>
<dbReference type="EC" id="2.3.1.46" evidence="1 2"/>
<dbReference type="EMBL" id="LT613636">
    <property type="protein sequence ID" value="SCN13860.1"/>
    <property type="molecule type" value="Genomic_DNA"/>
</dbReference>
<dbReference type="SMR" id="A0A1D3PCI9"/>
<dbReference type="UniPathway" id="UPA00051">
    <property type="reaction ID" value="UER00075"/>
</dbReference>
<dbReference type="GO" id="GO:0005737">
    <property type="term" value="C:cytoplasm"/>
    <property type="evidence" value="ECO:0007669"/>
    <property type="project" value="UniProtKB-SubCell"/>
</dbReference>
<dbReference type="GO" id="GO:0004414">
    <property type="term" value="F:homoserine O-acetyltransferase activity"/>
    <property type="evidence" value="ECO:0007669"/>
    <property type="project" value="UniProtKB-UniRule"/>
</dbReference>
<dbReference type="GO" id="GO:0008899">
    <property type="term" value="F:homoserine O-succinyltransferase activity"/>
    <property type="evidence" value="ECO:0007669"/>
    <property type="project" value="UniProtKB-EC"/>
</dbReference>
<dbReference type="GO" id="GO:0009086">
    <property type="term" value="P:methionine biosynthetic process"/>
    <property type="evidence" value="ECO:0007669"/>
    <property type="project" value="UniProtKB-UniRule"/>
</dbReference>
<dbReference type="Gene3D" id="3.40.50.880">
    <property type="match status" value="1"/>
</dbReference>
<dbReference type="HAMAP" id="MF_00295">
    <property type="entry name" value="MetA_acyltransf"/>
    <property type="match status" value="1"/>
</dbReference>
<dbReference type="InterPro" id="IPR029062">
    <property type="entry name" value="Class_I_gatase-like"/>
</dbReference>
<dbReference type="InterPro" id="IPR033752">
    <property type="entry name" value="MetA_family"/>
</dbReference>
<dbReference type="NCBIfam" id="NF003776">
    <property type="entry name" value="PRK05368.1-3"/>
    <property type="match status" value="1"/>
</dbReference>
<dbReference type="PANTHER" id="PTHR20919">
    <property type="entry name" value="HOMOSERINE O-SUCCINYLTRANSFERASE"/>
    <property type="match status" value="1"/>
</dbReference>
<dbReference type="PANTHER" id="PTHR20919:SF0">
    <property type="entry name" value="HOMOSERINE O-SUCCINYLTRANSFERASE"/>
    <property type="match status" value="1"/>
</dbReference>
<dbReference type="Pfam" id="PF04204">
    <property type="entry name" value="HTS"/>
    <property type="match status" value="1"/>
</dbReference>
<dbReference type="PIRSF" id="PIRSF000450">
    <property type="entry name" value="H_ser_succinyltr"/>
    <property type="match status" value="1"/>
</dbReference>
<dbReference type="SUPFAM" id="SSF52317">
    <property type="entry name" value="Class I glutamine amidotransferase-like"/>
    <property type="match status" value="1"/>
</dbReference>
<protein>
    <recommendedName>
        <fullName evidence="1">Homoserine O-succinyltransferase</fullName>
        <shortName evidence="1 3">HST</shortName>
        <ecNumber evidence="1 2">2.3.1.46</ecNumber>
    </recommendedName>
    <alternativeName>
        <fullName evidence="1">Homoserine transsuccinylase</fullName>
        <shortName evidence="1">HTS</shortName>
    </alternativeName>
</protein>
<reference key="1">
    <citation type="journal article" date="2017" name="Nat. Chem. Biol.">
        <title>Parallel evolution of non-homologous isofunctional enzymes in methionine biosynthesis.</title>
        <authorList>
            <person name="Bastard K."/>
            <person name="Perret A."/>
            <person name="Mariage A."/>
            <person name="Bessonnet T."/>
            <person name="Pinet-Turpault A."/>
            <person name="Petit J.L."/>
            <person name="Darii E."/>
            <person name="Bazire P."/>
            <person name="Vergne-Vaxelaire C."/>
            <person name="Brewee C."/>
            <person name="Debard A."/>
            <person name="Pellouin V."/>
            <person name="Besnard-Gonnet M."/>
            <person name="Artiguenave F."/>
            <person name="Medigue C."/>
            <person name="Vallenet D."/>
            <person name="Danchin A."/>
            <person name="Zaparucha A."/>
            <person name="Weissenbach J."/>
            <person name="Salanoubat M."/>
            <person name="de Berardinis V."/>
        </authorList>
    </citation>
    <scope>NUCLEOTIDE SEQUENCE [GENOMIC DNA]</scope>
    <scope>FUNCTION</scope>
    <scope>CATALYTIC ACTIVITY</scope>
    <source>
        <strain>ATCC 17001 / ATH 2.1.6 / BCRC 16408</strain>
    </source>
</reference>
<name>METAS_RHOPL</name>
<proteinExistence type="evidence at protein level"/>